<protein>
    <recommendedName>
        <fullName>(2R)-3-sulfolactate dehydrogenase (NADP(+))</fullName>
        <ecNumber>1.1.1.338</ecNumber>
    </recommendedName>
    <alternativeName>
        <fullName>(R)-2-hydroxyacid dehydrogenase</fullName>
    </alternativeName>
    <alternativeName>
        <fullName>(R)-sulfolactate dehydrogenase</fullName>
    </alternativeName>
</protein>
<organism>
    <name type="scientific">Chromohalobacter salexigens (strain ATCC BAA-138 / DSM 3043 / CIP 106854 / NCIMB 13768 / 1H11)</name>
    <dbReference type="NCBI Taxonomy" id="290398"/>
    <lineage>
        <taxon>Bacteria</taxon>
        <taxon>Pseudomonadati</taxon>
        <taxon>Pseudomonadota</taxon>
        <taxon>Gammaproteobacteria</taxon>
        <taxon>Oceanospirillales</taxon>
        <taxon>Halomonadaceae</taxon>
        <taxon>Chromohalobacter</taxon>
    </lineage>
</organism>
<proteinExistence type="evidence at protein level"/>
<dbReference type="EC" id="1.1.1.338"/>
<dbReference type="EMBL" id="CP000285">
    <property type="protein sequence ID" value="ABE59123.1"/>
    <property type="molecule type" value="Genomic_DNA"/>
</dbReference>
<dbReference type="RefSeq" id="WP_011507069.1">
    <property type="nucleotide sequence ID" value="NC_007963.1"/>
</dbReference>
<dbReference type="SMR" id="Q1QWN5"/>
<dbReference type="STRING" id="290398.Csal_1771"/>
<dbReference type="GeneID" id="95334483"/>
<dbReference type="KEGG" id="csa:Csal_1771"/>
<dbReference type="eggNOG" id="COG2055">
    <property type="taxonomic scope" value="Bacteria"/>
</dbReference>
<dbReference type="HOGENOM" id="CLU_040452_0_0_6"/>
<dbReference type="OrthoDB" id="9769447at2"/>
<dbReference type="BioCyc" id="MetaCyc:MONOMER-15868"/>
<dbReference type="BRENDA" id="1.1.1.338">
    <property type="organism ID" value="8057"/>
</dbReference>
<dbReference type="Proteomes" id="UP000000239">
    <property type="component" value="Chromosome"/>
</dbReference>
<dbReference type="GO" id="GO:0016491">
    <property type="term" value="F:oxidoreductase activity"/>
    <property type="evidence" value="ECO:0007669"/>
    <property type="project" value="UniProtKB-KW"/>
</dbReference>
<dbReference type="Gene3D" id="1.10.1530.10">
    <property type="match status" value="1"/>
</dbReference>
<dbReference type="Gene3D" id="3.30.1370.60">
    <property type="entry name" value="Hypothetical oxidoreductase yiak, domain 2"/>
    <property type="match status" value="1"/>
</dbReference>
<dbReference type="InterPro" id="IPR043144">
    <property type="entry name" value="Mal/L-sulf/L-lact_DH-like_ah"/>
</dbReference>
<dbReference type="InterPro" id="IPR043143">
    <property type="entry name" value="Mal/L-sulf/L-lact_DH-like_NADP"/>
</dbReference>
<dbReference type="InterPro" id="IPR036111">
    <property type="entry name" value="Mal/L-sulfo/L-lacto_DH-like_sf"/>
</dbReference>
<dbReference type="InterPro" id="IPR003767">
    <property type="entry name" value="Malate/L-lactate_DH-like"/>
</dbReference>
<dbReference type="PANTHER" id="PTHR11091:SF0">
    <property type="entry name" value="MALATE DEHYDROGENASE"/>
    <property type="match status" value="1"/>
</dbReference>
<dbReference type="PANTHER" id="PTHR11091">
    <property type="entry name" value="OXIDOREDUCTASE-RELATED"/>
    <property type="match status" value="1"/>
</dbReference>
<dbReference type="Pfam" id="PF02615">
    <property type="entry name" value="Ldh_2"/>
    <property type="match status" value="1"/>
</dbReference>
<dbReference type="SUPFAM" id="SSF89733">
    <property type="entry name" value="L-sulfolactate dehydrogenase-like"/>
    <property type="match status" value="1"/>
</dbReference>
<accession>Q1QWN5</accession>
<gene>
    <name type="primary">comC</name>
    <name type="ordered locus">Csal_1771</name>
</gene>
<reference key="1">
    <citation type="journal article" date="2011" name="Stand. Genomic Sci.">
        <title>Complete genome sequence of the halophilic and highly halotolerant Chromohalobacter salexigens type strain (1H11(T)).</title>
        <authorList>
            <person name="Copeland A."/>
            <person name="O'Connor K."/>
            <person name="Lucas S."/>
            <person name="Lapidus A."/>
            <person name="Berry K.W."/>
            <person name="Detter J.C."/>
            <person name="Del Rio T.G."/>
            <person name="Hammon N."/>
            <person name="Dalin E."/>
            <person name="Tice H."/>
            <person name="Pitluck S."/>
            <person name="Bruce D."/>
            <person name="Goodwin L."/>
            <person name="Han C."/>
            <person name="Tapia R."/>
            <person name="Saunders E."/>
            <person name="Schmutz J."/>
            <person name="Brettin T."/>
            <person name="Larimer F."/>
            <person name="Land M."/>
            <person name="Hauser L."/>
            <person name="Vargas C."/>
            <person name="Nieto J.J."/>
            <person name="Kyrpides N.C."/>
            <person name="Ivanova N."/>
            <person name="Goker M."/>
            <person name="Klenk H.P."/>
            <person name="Csonka L.N."/>
            <person name="Woyke T."/>
        </authorList>
    </citation>
    <scope>NUCLEOTIDE SEQUENCE [LARGE SCALE GENOMIC DNA]</scope>
    <source>
        <strain>ATCC BAA-138 / DSM 3043 / CIP 106854 / NCIMB 13768 / 1H11</strain>
    </source>
</reference>
<reference key="2">
    <citation type="journal article" date="2010" name="Microbiology">
        <title>Racemase activity effected by two dehydrogenases in sulfolactate degradation by Chromohalobacter salexigens: purification of (S)-sulfolactate dehydrogenase.</title>
        <authorList>
            <person name="Denger K."/>
            <person name="Cook A.M."/>
        </authorList>
    </citation>
    <scope>FUNCTION</scope>
    <scope>CATALYTIC ACTIVITY</scope>
    <source>
        <strain>ATCC BAA-138 / DSM 3043 / CIP 106854 / NCIMB 13768 / 1H11</strain>
    </source>
</reference>
<feature type="chain" id="PRO_0000418760" description="(2R)-3-sulfolactate dehydrogenase (NADP(+))">
    <location>
        <begin position="1"/>
        <end position="333"/>
    </location>
</feature>
<comment type="function">
    <text evidence="1">Catalyzes the reduction of sulfopyruvate to (R)-sulfolactate. Together with SlcC, provides a racemase system that converts (2S)-3-sulfolactate to (2R)-3-sulfolactate, which is degraded further by (2R)-sulfolactate sulfo-lyase.</text>
</comment>
<comment type="catalytic activity">
    <reaction evidence="1">
        <text>(2R)-3-sulfolactate + NADP(+) = 3-sulfopyruvate + NADPH + H(+)</text>
        <dbReference type="Rhea" id="RHEA:15537"/>
        <dbReference type="ChEBI" id="CHEBI:15378"/>
        <dbReference type="ChEBI" id="CHEBI:57783"/>
        <dbReference type="ChEBI" id="CHEBI:57940"/>
        <dbReference type="ChEBI" id="CHEBI:58349"/>
        <dbReference type="ChEBI" id="CHEBI:58738"/>
        <dbReference type="EC" id="1.1.1.338"/>
    </reaction>
</comment>
<comment type="similarity">
    <text evidence="2">Belongs to the LDH2/MDH2 oxidoreductase family.</text>
</comment>
<evidence type="ECO:0000269" key="1">
    <source>
    </source>
</evidence>
<evidence type="ECO:0000305" key="2"/>
<sequence length="333" mass="35182">MSRMISLREAETLAVAALEAVGVPRWEAEVTARALIDAERDGLASHGLSRLPFYLAQARSGKVVADAQARVEVAGSVIRVDARHGLAFPAIARGVERAIPLARELGLVAVAIGGSHHFGVAGAPVERLAREGLVAMAFSNAPSAMAPWGGKRPLYGTNPIAFATPRRGTDPLVIDLSLSKVARGKVMLAKKAGEPIPEGWALDIEGRPTTDPDAAIAGSMVPAGDAKGASLALMVELLTAGLTGSHFGFQASSFFEPEGEAPSVGHLMLAFDPAHFSDGYLEHIEALFQAMLEQEGVRLPGTRRHALRRERGESLELPEAVVDELRAYAVSRV</sequence>
<name>COMC_CHRSD</name>
<keyword id="KW-0520">NAD</keyword>
<keyword id="KW-0521">NADP</keyword>
<keyword id="KW-0560">Oxidoreductase</keyword>
<keyword id="KW-1185">Reference proteome</keyword>